<dbReference type="EMBL" id="AE005174">
    <property type="protein sequence ID" value="AAG57518.1"/>
    <property type="molecule type" value="Genomic_DNA"/>
</dbReference>
<dbReference type="EMBL" id="BA000007">
    <property type="protein sequence ID" value="BAB36694.1"/>
    <property type="molecule type" value="Genomic_DNA"/>
</dbReference>
<dbReference type="PIR" id="G91037">
    <property type="entry name" value="G91037"/>
</dbReference>
<dbReference type="RefSeq" id="NP_311298.1">
    <property type="nucleotide sequence ID" value="NC_002695.1"/>
</dbReference>
<dbReference type="RefSeq" id="WP_000186369.1">
    <property type="nucleotide sequence ID" value="NZ_VOAI01000001.1"/>
</dbReference>
<dbReference type="SMR" id="P0A771"/>
<dbReference type="STRING" id="155864.Z3658"/>
<dbReference type="GeneID" id="915626"/>
<dbReference type="KEGG" id="ece:Z3658"/>
<dbReference type="KEGG" id="ecs:ECs_3271"/>
<dbReference type="PATRIC" id="fig|386585.9.peg.3415"/>
<dbReference type="eggNOG" id="COG1914">
    <property type="taxonomic scope" value="Bacteria"/>
</dbReference>
<dbReference type="HOGENOM" id="CLU_020088_2_0_6"/>
<dbReference type="OMA" id="STYLVWT"/>
<dbReference type="Proteomes" id="UP000000558">
    <property type="component" value="Chromosome"/>
</dbReference>
<dbReference type="Proteomes" id="UP000002519">
    <property type="component" value="Chromosome"/>
</dbReference>
<dbReference type="GO" id="GO:0005886">
    <property type="term" value="C:plasma membrane"/>
    <property type="evidence" value="ECO:0007669"/>
    <property type="project" value="UniProtKB-SubCell"/>
</dbReference>
<dbReference type="GO" id="GO:0015086">
    <property type="term" value="F:cadmium ion transmembrane transporter activity"/>
    <property type="evidence" value="ECO:0007669"/>
    <property type="project" value="TreeGrafter"/>
</dbReference>
<dbReference type="GO" id="GO:0005384">
    <property type="term" value="F:manganese ion transmembrane transporter activity"/>
    <property type="evidence" value="ECO:0007669"/>
    <property type="project" value="TreeGrafter"/>
</dbReference>
<dbReference type="GO" id="GO:0046872">
    <property type="term" value="F:metal ion binding"/>
    <property type="evidence" value="ECO:0007669"/>
    <property type="project" value="UniProtKB-UniRule"/>
</dbReference>
<dbReference type="GO" id="GO:0015293">
    <property type="term" value="F:symporter activity"/>
    <property type="evidence" value="ECO:0007669"/>
    <property type="project" value="UniProtKB-UniRule"/>
</dbReference>
<dbReference type="GO" id="GO:0034755">
    <property type="term" value="P:iron ion transmembrane transport"/>
    <property type="evidence" value="ECO:0007669"/>
    <property type="project" value="TreeGrafter"/>
</dbReference>
<dbReference type="HAMAP" id="MF_00221">
    <property type="entry name" value="NRAMP"/>
    <property type="match status" value="1"/>
</dbReference>
<dbReference type="InterPro" id="IPR001046">
    <property type="entry name" value="NRAMP_fam"/>
</dbReference>
<dbReference type="NCBIfam" id="TIGR01197">
    <property type="entry name" value="nramp"/>
    <property type="match status" value="1"/>
</dbReference>
<dbReference type="NCBIfam" id="NF037982">
    <property type="entry name" value="Nramp_1"/>
    <property type="match status" value="1"/>
</dbReference>
<dbReference type="NCBIfam" id="NF001923">
    <property type="entry name" value="PRK00701.1"/>
    <property type="match status" value="1"/>
</dbReference>
<dbReference type="PANTHER" id="PTHR11706:SF33">
    <property type="entry name" value="NATURAL RESISTANCE-ASSOCIATED MACROPHAGE PROTEIN 2"/>
    <property type="match status" value="1"/>
</dbReference>
<dbReference type="PANTHER" id="PTHR11706">
    <property type="entry name" value="SOLUTE CARRIER PROTEIN FAMILY 11 MEMBER"/>
    <property type="match status" value="1"/>
</dbReference>
<dbReference type="Pfam" id="PF01566">
    <property type="entry name" value="Nramp"/>
    <property type="match status" value="1"/>
</dbReference>
<dbReference type="PRINTS" id="PR00447">
    <property type="entry name" value="NATRESASSCMP"/>
</dbReference>
<keyword id="KW-0997">Cell inner membrane</keyword>
<keyword id="KW-1003">Cell membrane</keyword>
<keyword id="KW-0406">Ion transport</keyword>
<keyword id="KW-0472">Membrane</keyword>
<keyword id="KW-1185">Reference proteome</keyword>
<keyword id="KW-0769">Symport</keyword>
<keyword id="KW-0812">Transmembrane</keyword>
<keyword id="KW-1133">Transmembrane helix</keyword>
<keyword id="KW-0813">Transport</keyword>
<comment type="function">
    <text evidence="1">H(+)-stimulated, divalent metal cation uptake system.</text>
</comment>
<comment type="subcellular location">
    <subcellularLocation>
        <location evidence="1">Cell inner membrane</location>
        <topology evidence="1">Multi-pass membrane protein</topology>
    </subcellularLocation>
</comment>
<comment type="similarity">
    <text evidence="1">Belongs to the NRAMP family.</text>
</comment>
<reference key="1">
    <citation type="journal article" date="2001" name="Nature">
        <title>Genome sequence of enterohaemorrhagic Escherichia coli O157:H7.</title>
        <authorList>
            <person name="Perna N.T."/>
            <person name="Plunkett G. III"/>
            <person name="Burland V."/>
            <person name="Mau B."/>
            <person name="Glasner J.D."/>
            <person name="Rose D.J."/>
            <person name="Mayhew G.F."/>
            <person name="Evans P.S."/>
            <person name="Gregor J."/>
            <person name="Kirkpatrick H.A."/>
            <person name="Posfai G."/>
            <person name="Hackett J."/>
            <person name="Klink S."/>
            <person name="Boutin A."/>
            <person name="Shao Y."/>
            <person name="Miller L."/>
            <person name="Grotbeck E.J."/>
            <person name="Davis N.W."/>
            <person name="Lim A."/>
            <person name="Dimalanta E.T."/>
            <person name="Potamousis K."/>
            <person name="Apodaca J."/>
            <person name="Anantharaman T.S."/>
            <person name="Lin J."/>
            <person name="Yen G."/>
            <person name="Schwartz D.C."/>
            <person name="Welch R.A."/>
            <person name="Blattner F.R."/>
        </authorList>
    </citation>
    <scope>NUCLEOTIDE SEQUENCE [LARGE SCALE GENOMIC DNA]</scope>
    <source>
        <strain>O157:H7 / EDL933 / ATCC 700927 / EHEC</strain>
    </source>
</reference>
<reference key="2">
    <citation type="journal article" date="2001" name="DNA Res.">
        <title>Complete genome sequence of enterohemorrhagic Escherichia coli O157:H7 and genomic comparison with a laboratory strain K-12.</title>
        <authorList>
            <person name="Hayashi T."/>
            <person name="Makino K."/>
            <person name="Ohnishi M."/>
            <person name="Kurokawa K."/>
            <person name="Ishii K."/>
            <person name="Yokoyama K."/>
            <person name="Han C.-G."/>
            <person name="Ohtsubo E."/>
            <person name="Nakayama K."/>
            <person name="Murata T."/>
            <person name="Tanaka M."/>
            <person name="Tobe T."/>
            <person name="Iida T."/>
            <person name="Takami H."/>
            <person name="Honda T."/>
            <person name="Sasakawa C."/>
            <person name="Ogasawara N."/>
            <person name="Yasunaga T."/>
            <person name="Kuhara S."/>
            <person name="Shiba T."/>
            <person name="Hattori M."/>
            <person name="Shinagawa H."/>
        </authorList>
    </citation>
    <scope>NUCLEOTIDE SEQUENCE [LARGE SCALE GENOMIC DNA]</scope>
    <source>
        <strain>O157:H7 / Sakai / RIMD 0509952 / EHEC</strain>
    </source>
</reference>
<accession>P0A771</accession>
<accession>P77145</accession>
<feature type="chain" id="PRO_0000212618" description="Divalent metal cation transporter MntH">
    <location>
        <begin position="1"/>
        <end position="412"/>
    </location>
</feature>
<feature type="topological domain" description="Cytoplasmic" evidence="1">
    <location>
        <begin position="1"/>
        <end position="19"/>
    </location>
</feature>
<feature type="transmembrane region" description="Helical" evidence="1">
    <location>
        <begin position="20"/>
        <end position="39"/>
    </location>
</feature>
<feature type="topological domain" description="Periplasmic" evidence="1">
    <location>
        <begin position="40"/>
        <end position="51"/>
    </location>
</feature>
<feature type="transmembrane region" description="Helical" evidence="1">
    <location>
        <begin position="52"/>
        <end position="71"/>
    </location>
</feature>
<feature type="topological domain" description="Cytoplasmic" evidence="1">
    <location>
        <begin position="72"/>
        <end position="95"/>
    </location>
</feature>
<feature type="transmembrane region" description="Helical" evidence="1">
    <location>
        <begin position="96"/>
        <end position="118"/>
    </location>
</feature>
<feature type="topological domain" description="Periplasmic" evidence="1">
    <location>
        <begin position="119"/>
        <end position="125"/>
    </location>
</feature>
<feature type="transmembrane region" description="Helical" evidence="1">
    <location>
        <begin position="126"/>
        <end position="145"/>
    </location>
</feature>
<feature type="topological domain" description="Cytoplasmic" evidence="1">
    <location>
        <begin position="146"/>
        <end position="155"/>
    </location>
</feature>
<feature type="transmembrane region" description="Helical" evidence="1">
    <location>
        <begin position="156"/>
        <end position="175"/>
    </location>
</feature>
<feature type="topological domain" description="Periplasmic" evidence="1">
    <location>
        <begin position="176"/>
        <end position="196"/>
    </location>
</feature>
<feature type="transmembrane region" description="Helical" evidence="1">
    <location>
        <begin position="197"/>
        <end position="220"/>
    </location>
</feature>
<feature type="topological domain" description="Cytoplasmic" evidence="1">
    <location>
        <begin position="221"/>
        <end position="238"/>
    </location>
</feature>
<feature type="transmembrane region" description="Helical" evidence="1">
    <location>
        <begin position="239"/>
        <end position="258"/>
    </location>
</feature>
<feature type="topological domain" description="Periplasmic" evidence="1">
    <location>
        <begin position="259"/>
        <end position="276"/>
    </location>
</feature>
<feature type="transmembrane region" description="Helical" evidence="1">
    <location>
        <begin position="277"/>
        <end position="297"/>
    </location>
</feature>
<feature type="topological domain" description="Cytoplasmic" evidence="1">
    <location>
        <begin position="298"/>
        <end position="327"/>
    </location>
</feature>
<feature type="transmembrane region" description="Helical" evidence="1">
    <location>
        <begin position="328"/>
        <end position="344"/>
    </location>
</feature>
<feature type="topological domain" description="Periplasmic" evidence="1">
    <location>
        <begin position="345"/>
        <end position="350"/>
    </location>
</feature>
<feature type="transmembrane region" description="Helical" evidence="1">
    <location>
        <begin position="351"/>
        <end position="370"/>
    </location>
</feature>
<feature type="topological domain" description="Cytoplasmic" evidence="1">
    <location>
        <begin position="371"/>
        <end position="387"/>
    </location>
</feature>
<feature type="transmembrane region" description="Helical" evidence="1">
    <location>
        <begin position="388"/>
        <end position="406"/>
    </location>
</feature>
<feature type="topological domain" description="Periplasmic" evidence="1">
    <location>
        <begin position="407"/>
        <end position="412"/>
    </location>
</feature>
<protein>
    <recommendedName>
        <fullName evidence="1">Divalent metal cation transporter MntH</fullName>
    </recommendedName>
</protein>
<proteinExistence type="inferred from homology"/>
<name>MNTH_ECO57</name>
<organism>
    <name type="scientific">Escherichia coli O157:H7</name>
    <dbReference type="NCBI Taxonomy" id="83334"/>
    <lineage>
        <taxon>Bacteria</taxon>
        <taxon>Pseudomonadati</taxon>
        <taxon>Pseudomonadota</taxon>
        <taxon>Gammaproteobacteria</taxon>
        <taxon>Enterobacterales</taxon>
        <taxon>Enterobacteriaceae</taxon>
        <taxon>Escherichia</taxon>
    </lineage>
</organism>
<sequence>MTNYRVESSSGRAARKMRLALMGPAFIAAIGYIDPGNFATNIQAGASFGYQLLWVVVWANLMAMLIQILSAKLGIATGKNLAEQIRDHYPRPVVWFYWVQAEIIAMATDLAEFIGAAIGFKLILGVSLLQGAVLTGIATFLILMLQRRGQKPLEKVIGGLLLFVAAAYIVELIFSQPNLAQLGKGMVIPSLPTSEAVFLAAGVLGATIMPHVIYLHSSLTQHLHGGSRQQRYSATKWDVAIAMTIAGFVNLAMMATAAAAFHFSGHTGVADLDEAYLTLQPLLSHAAATVFGLSLVAAGLSSTVVGTLAGQVVMQGFIRFHIPLWVRRTVTMLPSFIVILMGLDPTRILVMSQVLLSFGIALALVPLLIFTSDSKLMGDLVNSKRVKQTGWVIVVLVVALNIWLLVGTALGL</sequence>
<evidence type="ECO:0000255" key="1">
    <source>
        <dbReference type="HAMAP-Rule" id="MF_00221"/>
    </source>
</evidence>
<gene>
    <name evidence="1" type="primary">mntH</name>
    <name type="ordered locus">Z3658</name>
    <name type="ordered locus">ECs3271</name>
</gene>